<organism>
    <name type="scientific">Penicillium ochrochloron</name>
    <dbReference type="NCBI Taxonomy" id="69780"/>
    <lineage>
        <taxon>Eukaryota</taxon>
        <taxon>Fungi</taxon>
        <taxon>Dikarya</taxon>
        <taxon>Ascomycota</taxon>
        <taxon>Pezizomycotina</taxon>
        <taxon>Eurotiomycetes</taxon>
        <taxon>Eurotiomycetidae</taxon>
        <taxon>Eurotiales</taxon>
        <taxon>Aspergillaceae</taxon>
        <taxon>Penicillium</taxon>
    </lineage>
</organism>
<evidence type="ECO:0000250" key="1">
    <source>
        <dbReference type="UniProtKB" id="Q50EL0"/>
    </source>
</evidence>
<evidence type="ECO:0000269" key="2">
    <source>
    </source>
</evidence>
<evidence type="ECO:0000303" key="3">
    <source>
    </source>
</evidence>
<evidence type="ECO:0000305" key="4"/>
<comment type="function">
    <text evidence="2">Aromatic prenyl transferase; part of the gene cluster that mediates the biosynthesis of the indole diterpenes penitrems (PubMed:25831977). The geranylgeranyl diphosphate (GGPP) synthase ptmG catalyzes the first step in penitrem biosynthesis via conversion of farnesyl pyrophosphate and isopentyl pyrophosphate into geranylgeranyl pyrophosphate (GGPP) (PubMed:25831977). Condensation of indole-3-glycerol phosphate with GGPP by the prenyl transferase ptmC then forms 3-geranylgeranylindole (3-GGI) (PubMed:25831977). Epoxidation by the FAD-dependent monooxygenase ptmM leads to a epoxidized-GGI that is substrate of the terpene cyclase ptmB for cyclization to yield paspaline (PubMed:25831977). Paspaline is subsequently converted to 13-desoxypaxilline by the cytochrome P450 monooxygenase ptmP, the latter being then converted to paxilline by the cytochrome P450 monooxygenase ptmQ (PubMed:25831977). Paxilline is converted to beta-paxitriol via C-10 ketoreduction by the short-chain dehydrogenase ptmH which can be monoprenylated at the C-20 by the indole diterpene prenyltransferase ptmD (PubMed:25831977). A two-step elimination (acetylation and elimination) process performed by the O-acetyltransferase ptmV and ptmI leads to the production of the prenylated form of penijanthine (PubMed:25831977). The FAD-linked oxidoreductase ptmO then converts the prenylated form of penijanthine into PC-M5 which is in turn transformed into PC-M4 by the aromatic dimethylallyltransferase ptmE (PubMed:25831977). Five sequential oxidative transformations performed by the cytochrome P450 monooxygenases ptmK, ptmU, ptmL, ptmN and ptmJ yield the various penitrem compounds. PtmK, ptmU and ptmM are involved in the formation of the key bicyclic ring of penitrem C via the formation of the intermediates secopenitrem D and penitrem D. PtmL catalyzes the epoxidation of penitrem D and C to yield penitrem B and F, respectively. PtmJ catalyzes the last benzylic hydroxylation to convert penitrem B to prenitrem E and penitrem F to penitrem A (PubMed:25831977).</text>
</comment>
<comment type="pathway">
    <text evidence="2">Secondary metabolite biosynthesis.</text>
</comment>
<comment type="subunit">
    <text evidence="1">Homodimer.</text>
</comment>
<comment type="similarity">
    <text evidence="4">Belongs to the tryptophan dimethylallyltransferase family.</text>
</comment>
<keyword id="KW-0808">Transferase</keyword>
<proteinExistence type="inferred from homology"/>
<sequence length="425" mass="48751">MGSLSSPTDLTPYQVLSKYKKFPSPDEEFWWDHAASTLADLIKWTKATPAQEYEFLQFFYEHVIPNFSGYRPYDVPGRAWNTGITPSGLPLEYSVNWRNIDANAMVRVGVEPISQFAGTARDPYSHYKIWDTLNQLSQVKALKSFDLELWRHFSSALCTSREEEALLDQTRTLPESFSIAKMQHSMGFDFCDDEVVVKIYLIPNMKARASGTPLAELLTGSIHAIYRDTIDRETLATVINYLDSTSNFNDATWFSFDCIPRSQSRIKLYGSDFRTTWSRAEDLWTVGGRYTDAVTMKGLAYLKELWDLLPIQDFETLPEQAVQNPPMLWAYEIRPGDKIPSPRIYIPGHCLNDKKVADGLSAFFKRVGWSDLGDQYTDRLFSMFPKQDLKDSTALHTWIAFSYTEKSGVYMNCYYLASASFPFKL</sequence>
<protein>
    <recommendedName>
        <fullName evidence="3">Aromatic prenyl transferase ptmE</fullName>
        <ecNumber evidence="2">2.5.1.-</ecNumber>
    </recommendedName>
    <alternativeName>
        <fullName evidence="3">Penitrem biosynthesis cluster 2 protein E</fullName>
    </alternativeName>
</protein>
<dbReference type="EC" id="2.5.1.-" evidence="2"/>
<dbReference type="EMBL" id="LC027937">
    <property type="protein sequence ID" value="BAU61567.1"/>
    <property type="molecule type" value="Genomic_DNA"/>
</dbReference>
<dbReference type="SMR" id="A0A140JWU0"/>
<dbReference type="GO" id="GO:0016765">
    <property type="term" value="F:transferase activity, transferring alkyl or aryl (other than methyl) groups"/>
    <property type="evidence" value="ECO:0007669"/>
    <property type="project" value="InterPro"/>
</dbReference>
<dbReference type="GO" id="GO:0009820">
    <property type="term" value="P:alkaloid metabolic process"/>
    <property type="evidence" value="ECO:0007669"/>
    <property type="project" value="InterPro"/>
</dbReference>
<dbReference type="CDD" id="cd13929">
    <property type="entry name" value="PT-DMATS_CymD"/>
    <property type="match status" value="1"/>
</dbReference>
<dbReference type="InterPro" id="IPR033964">
    <property type="entry name" value="Aro_prenylTrfase"/>
</dbReference>
<dbReference type="InterPro" id="IPR017795">
    <property type="entry name" value="Aro_prenylTrfase_DMATS"/>
</dbReference>
<dbReference type="InterPro" id="IPR012148">
    <property type="entry name" value="DMATS-type_fun"/>
</dbReference>
<dbReference type="NCBIfam" id="TIGR03429">
    <property type="entry name" value="arom_pren_DMATS"/>
    <property type="match status" value="1"/>
</dbReference>
<dbReference type="PANTHER" id="PTHR40627">
    <property type="entry name" value="INDOLE PRENYLTRANSFERASE TDIB-RELATED"/>
    <property type="match status" value="1"/>
</dbReference>
<dbReference type="PANTHER" id="PTHR40627:SF3">
    <property type="entry name" value="PRENYLTRANSFERASE ASQH2-RELATED"/>
    <property type="match status" value="1"/>
</dbReference>
<dbReference type="Pfam" id="PF11991">
    <property type="entry name" value="Trp_DMAT"/>
    <property type="match status" value="1"/>
</dbReference>
<dbReference type="PIRSF" id="PIRSF000509">
    <property type="entry name" value="Trp_DMAT"/>
    <property type="match status" value="1"/>
</dbReference>
<dbReference type="SFLD" id="SFLDS00036">
    <property type="entry name" value="Aromatic_Prenyltransferase"/>
    <property type="match status" value="1"/>
</dbReference>
<dbReference type="SFLD" id="SFLDG01162">
    <property type="entry name" value="I"/>
    <property type="match status" value="1"/>
</dbReference>
<name>PTME_PENOH</name>
<accession>A0A140JWU0</accession>
<gene>
    <name evidence="3" type="primary">ptmE</name>
</gene>
<feature type="chain" id="PRO_0000446560" description="Aromatic prenyl transferase ptmE">
    <location>
        <begin position="1"/>
        <end position="425"/>
    </location>
</feature>
<feature type="binding site" evidence="1">
    <location>
        <begin position="83"/>
        <end position="84"/>
    </location>
    <ligand>
        <name>L-tryptophan</name>
        <dbReference type="ChEBI" id="CHEBI:57912"/>
    </ligand>
</feature>
<feature type="binding site" evidence="1">
    <location>
        <position position="92"/>
    </location>
    <ligand>
        <name>L-tryptophan</name>
        <dbReference type="ChEBI" id="CHEBI:57912"/>
    </ligand>
</feature>
<feature type="binding site" evidence="1">
    <location>
        <position position="107"/>
    </location>
    <ligand>
        <name>substrate</name>
    </ligand>
</feature>
<feature type="binding site" evidence="1">
    <location>
        <position position="198"/>
    </location>
    <ligand>
        <name>substrate</name>
    </ligand>
</feature>
<feature type="binding site" evidence="1">
    <location>
        <position position="200"/>
    </location>
    <ligand>
        <name>substrate</name>
    </ligand>
</feature>
<feature type="binding site" evidence="1">
    <location>
        <position position="265"/>
    </location>
    <ligand>
        <name>substrate</name>
    </ligand>
</feature>
<feature type="binding site" evidence="1">
    <location>
        <position position="267"/>
    </location>
    <ligand>
        <name>substrate</name>
    </ligand>
</feature>
<feature type="binding site" evidence="1">
    <location>
        <position position="269"/>
    </location>
    <ligand>
        <name>substrate</name>
    </ligand>
</feature>
<feature type="binding site" evidence="1">
    <location>
        <position position="345"/>
    </location>
    <ligand>
        <name>substrate</name>
    </ligand>
</feature>
<feature type="binding site" evidence="1">
    <location>
        <position position="410"/>
    </location>
    <ligand>
        <name>substrate</name>
    </ligand>
</feature>
<feature type="binding site" evidence="1">
    <location>
        <position position="414"/>
    </location>
    <ligand>
        <name>substrate</name>
    </ligand>
</feature>
<reference key="1">
    <citation type="journal article" date="2015" name="Angew. Chem. Int. Ed.">
        <title>Reconstitution of biosynthetic machinery for the synthesis of the highly elaborated indole diterpene penitrem.</title>
        <authorList>
            <person name="Liu C."/>
            <person name="Tagami K."/>
            <person name="Minami A."/>
            <person name="Matsumoto T."/>
            <person name="Frisvad J.C."/>
            <person name="Suzuki H."/>
            <person name="Ishikawa J."/>
            <person name="Gomi K."/>
            <person name="Oikawa H."/>
        </authorList>
    </citation>
    <scope>NUCLEOTIDE SEQUENCE [GENOMIC DNA]</scope>
    <scope>IDENTIFICATION</scope>
    <scope>FUNCTION</scope>
    <scope>PATHWAY</scope>
    <source>
        <strain>ATCC 90288 / AK-40</strain>
    </source>
</reference>